<name>TBL30_ARATH</name>
<gene>
    <name type="primary">TBL30</name>
    <name type="ordered locus">At2g40160</name>
    <name type="ORF">T7M7.25</name>
    <name type="ORF">T7M7.4</name>
</gene>
<keyword id="KW-0025">Alternative splicing</keyword>
<keyword id="KW-0472">Membrane</keyword>
<keyword id="KW-1185">Reference proteome</keyword>
<keyword id="KW-0735">Signal-anchor</keyword>
<keyword id="KW-0812">Transmembrane</keyword>
<keyword id="KW-1133">Transmembrane helix</keyword>
<dbReference type="EMBL" id="AF085279">
    <property type="protein sequence ID" value="AAD25931.1"/>
    <property type="status" value="ALT_SEQ"/>
    <property type="molecule type" value="Genomic_DNA"/>
</dbReference>
<dbReference type="EMBL" id="CP002685">
    <property type="protein sequence ID" value="AEC09790.1"/>
    <property type="molecule type" value="Genomic_DNA"/>
</dbReference>
<dbReference type="EMBL" id="CP002685">
    <property type="protein sequence ID" value="AEC09791.1"/>
    <property type="molecule type" value="Genomic_DNA"/>
</dbReference>
<dbReference type="EMBL" id="AY056791">
    <property type="protein sequence ID" value="AAL10482.1"/>
    <property type="molecule type" value="mRNA"/>
</dbReference>
<dbReference type="EMBL" id="AY113175">
    <property type="protein sequence ID" value="AAM47478.1"/>
    <property type="molecule type" value="mRNA"/>
</dbReference>
<dbReference type="PIR" id="A84826">
    <property type="entry name" value="A84826"/>
</dbReference>
<dbReference type="RefSeq" id="NP_001189720.1">
    <molecule id="Q9SEZ9-2"/>
    <property type="nucleotide sequence ID" value="NM_001202791.1"/>
</dbReference>
<dbReference type="RefSeq" id="NP_565924.1">
    <molecule id="Q9SEZ9-1"/>
    <property type="nucleotide sequence ID" value="NM_129574.2"/>
</dbReference>
<dbReference type="SMR" id="Q9SEZ9"/>
<dbReference type="BioGRID" id="3945">
    <property type="interactions" value="1"/>
</dbReference>
<dbReference type="IntAct" id="Q9SEZ9">
    <property type="interactions" value="2"/>
</dbReference>
<dbReference type="STRING" id="3702.Q9SEZ9"/>
<dbReference type="PaxDb" id="3702-AT2G40160.2"/>
<dbReference type="ProteomicsDB" id="234145">
    <molecule id="Q9SEZ9-1"/>
</dbReference>
<dbReference type="EnsemblPlants" id="AT2G40160.1">
    <molecule id="Q9SEZ9-1"/>
    <property type="protein sequence ID" value="AT2G40160.1"/>
    <property type="gene ID" value="AT2G40160"/>
</dbReference>
<dbReference type="EnsemblPlants" id="AT2G40160.2">
    <molecule id="Q9SEZ9-2"/>
    <property type="protein sequence ID" value="AT2G40160.2"/>
    <property type="gene ID" value="AT2G40160"/>
</dbReference>
<dbReference type="GeneID" id="818607"/>
<dbReference type="Gramene" id="AT2G40160.1">
    <molecule id="Q9SEZ9-1"/>
    <property type="protein sequence ID" value="AT2G40160.1"/>
    <property type="gene ID" value="AT2G40160"/>
</dbReference>
<dbReference type="Gramene" id="AT2G40160.2">
    <molecule id="Q9SEZ9-2"/>
    <property type="protein sequence ID" value="AT2G40160.2"/>
    <property type="gene ID" value="AT2G40160"/>
</dbReference>
<dbReference type="KEGG" id="ath:AT2G40160"/>
<dbReference type="Araport" id="AT2G40160"/>
<dbReference type="TAIR" id="AT2G40160">
    <property type="gene designation" value="TBL30"/>
</dbReference>
<dbReference type="eggNOG" id="ENOG502QUBK">
    <property type="taxonomic scope" value="Eukaryota"/>
</dbReference>
<dbReference type="HOGENOM" id="CLU_020953_3_1_1"/>
<dbReference type="InParanoid" id="Q9SEZ9"/>
<dbReference type="OMA" id="QNIAYES"/>
<dbReference type="PhylomeDB" id="Q9SEZ9"/>
<dbReference type="PRO" id="PR:Q9SEZ9"/>
<dbReference type="Proteomes" id="UP000006548">
    <property type="component" value="Chromosome 2"/>
</dbReference>
<dbReference type="ExpressionAtlas" id="Q9SEZ9">
    <property type="expression patterns" value="baseline and differential"/>
</dbReference>
<dbReference type="GO" id="GO:0016020">
    <property type="term" value="C:membrane"/>
    <property type="evidence" value="ECO:0007669"/>
    <property type="project" value="UniProtKB-SubCell"/>
</dbReference>
<dbReference type="GO" id="GO:0016413">
    <property type="term" value="F:O-acetyltransferase activity"/>
    <property type="evidence" value="ECO:0007669"/>
    <property type="project" value="InterPro"/>
</dbReference>
<dbReference type="InterPro" id="IPR029962">
    <property type="entry name" value="TBL"/>
</dbReference>
<dbReference type="InterPro" id="IPR026057">
    <property type="entry name" value="TBL_C"/>
</dbReference>
<dbReference type="InterPro" id="IPR025846">
    <property type="entry name" value="TBL_N"/>
</dbReference>
<dbReference type="PANTHER" id="PTHR32285:SF157">
    <property type="entry name" value="PROTEIN TRICHOME BIREFRINGENCE-LIKE 30"/>
    <property type="match status" value="1"/>
</dbReference>
<dbReference type="PANTHER" id="PTHR32285">
    <property type="entry name" value="PROTEIN TRICHOME BIREFRINGENCE-LIKE 9-RELATED"/>
    <property type="match status" value="1"/>
</dbReference>
<dbReference type="Pfam" id="PF13839">
    <property type="entry name" value="PC-Esterase"/>
    <property type="match status" value="1"/>
</dbReference>
<dbReference type="Pfam" id="PF14416">
    <property type="entry name" value="PMR5N"/>
    <property type="match status" value="1"/>
</dbReference>
<sequence length="427" mass="50013">MKQTDGRERKAYLSLLYFAVILLPVFLLGCYLYNEKQLRVGQFQEFNTHNLQEHITPLQQSKEDKDKKTDLVPLEFCDVFTGKWVLDNVTHPLYKEDECEFLSEWVACTRNGRPDSKYQKWRWQPQDCSLPRFDSKLLLEKLRGKKLMFIGDSIHYNQWQSMVCMVQSVIPSGKKTLKHTAQMSIFNIEEYNATISFYWAPFLVESNADPPDKRDGKTDPVIIPNSISKHGENWKDADYLIFNTYIWWTRHSTIKVLKQESFNKGDSKEYNEIGIYIVYKQVLSTWTKWLEQNINPSQTSIFFSSMSPTHIRSSDWGFNEGSKCEKETEPILNMSKPINVGTNRRLYEIALNATKSTKVPIHFLNITTMSEYRKDGHTSFYGSINGKLMTPEQKLDPRTFADCYHWCLPGLPDSWNELLSLYIIYKI</sequence>
<comment type="function">
    <text evidence="1 2">May act as a bridging protein that binds pectin and other cell wall polysaccharides. Probably involved in maintaining esterification of pectins (By similarity). May be involved in the specific O-acetylation of cell wall polymers (By similarity).</text>
</comment>
<comment type="subcellular location">
    <subcellularLocation>
        <location evidence="4">Membrane</location>
        <topology evidence="4">Single-pass type II membrane protein</topology>
    </subcellularLocation>
</comment>
<comment type="alternative products">
    <event type="alternative splicing"/>
    <isoform>
        <id>Q9SEZ9-1</id>
        <name>1</name>
        <sequence type="displayed"/>
    </isoform>
    <isoform>
        <id>Q9SEZ9-2</id>
        <name>2</name>
        <sequence type="described" ref="VSP_053693"/>
    </isoform>
</comment>
<comment type="miscellaneous">
    <text evidence="5">Contains 2 motifs that are conserved in esterases, but it is unlikely that this protein belongs to the catalytically active pectin esterases.</text>
</comment>
<comment type="similarity">
    <text evidence="4">Belongs to the PC-esterase family. TBL subfamily.</text>
</comment>
<comment type="sequence caution" evidence="4">
    <conflict type="erroneous gene model prediction">
        <sequence resource="EMBL-CDS" id="AAD25931"/>
    </conflict>
</comment>
<feature type="chain" id="PRO_0000425395" description="Protein trichome birefringence-like 30">
    <location>
        <begin position="1"/>
        <end position="427"/>
    </location>
</feature>
<feature type="transmembrane region" description="Helical; Signal-anchor for type II membrane protein" evidence="3">
    <location>
        <begin position="12"/>
        <end position="32"/>
    </location>
</feature>
<feature type="short sequence motif" description="GDS motif">
    <location>
        <begin position="151"/>
        <end position="153"/>
    </location>
</feature>
<feature type="short sequence motif" description="DCXHWCLPGXXDXWN motif">
    <location>
        <begin position="402"/>
        <end position="416"/>
    </location>
</feature>
<feature type="splice variant" id="VSP_053693" description="In isoform 2." evidence="4">
    <original>YIIYKI</original>
    <variation>FLLHRERQKVTGRDERATAK</variation>
    <location>
        <begin position="422"/>
        <end position="427"/>
    </location>
</feature>
<proteinExistence type="evidence at transcript level"/>
<organism>
    <name type="scientific">Arabidopsis thaliana</name>
    <name type="common">Mouse-ear cress</name>
    <dbReference type="NCBI Taxonomy" id="3702"/>
    <lineage>
        <taxon>Eukaryota</taxon>
        <taxon>Viridiplantae</taxon>
        <taxon>Streptophyta</taxon>
        <taxon>Embryophyta</taxon>
        <taxon>Tracheophyta</taxon>
        <taxon>Spermatophyta</taxon>
        <taxon>Magnoliopsida</taxon>
        <taxon>eudicotyledons</taxon>
        <taxon>Gunneridae</taxon>
        <taxon>Pentapetalae</taxon>
        <taxon>rosids</taxon>
        <taxon>malvids</taxon>
        <taxon>Brassicales</taxon>
        <taxon>Brassicaceae</taxon>
        <taxon>Camelineae</taxon>
        <taxon>Arabidopsis</taxon>
    </lineage>
</organism>
<accession>Q9SEZ9</accession>
<accession>F4IGZ7</accession>
<accession>Q9XEE7</accession>
<reference key="1">
    <citation type="journal article" date="1999" name="Genome Res.">
        <title>A cluster of ABA-regulated genes on Arabidopsis thaliana BAC T07M07.</title>
        <authorList>
            <person name="Wang M.L."/>
            <person name="Belmonte S."/>
            <person name="Kim U."/>
            <person name="Dolan M."/>
            <person name="Morris J.W."/>
            <person name="Goodman H.M."/>
        </authorList>
    </citation>
    <scope>NUCLEOTIDE SEQUENCE [GENOMIC DNA]</scope>
</reference>
<reference key="2">
    <citation type="journal article" date="1999" name="Nature">
        <title>Sequence and analysis of chromosome 2 of the plant Arabidopsis thaliana.</title>
        <authorList>
            <person name="Lin X."/>
            <person name="Kaul S."/>
            <person name="Rounsley S.D."/>
            <person name="Shea T.P."/>
            <person name="Benito M.-I."/>
            <person name="Town C.D."/>
            <person name="Fujii C.Y."/>
            <person name="Mason T.M."/>
            <person name="Bowman C.L."/>
            <person name="Barnstead M.E."/>
            <person name="Feldblyum T.V."/>
            <person name="Buell C.R."/>
            <person name="Ketchum K.A."/>
            <person name="Lee J.J."/>
            <person name="Ronning C.M."/>
            <person name="Koo H.L."/>
            <person name="Moffat K.S."/>
            <person name="Cronin L.A."/>
            <person name="Shen M."/>
            <person name="Pai G."/>
            <person name="Van Aken S."/>
            <person name="Umayam L."/>
            <person name="Tallon L.J."/>
            <person name="Gill J.E."/>
            <person name="Adams M.D."/>
            <person name="Carrera A.J."/>
            <person name="Creasy T.H."/>
            <person name="Goodman H.M."/>
            <person name="Somerville C.R."/>
            <person name="Copenhaver G.P."/>
            <person name="Preuss D."/>
            <person name="Nierman W.C."/>
            <person name="White O."/>
            <person name="Eisen J.A."/>
            <person name="Salzberg S.L."/>
            <person name="Fraser C.M."/>
            <person name="Venter J.C."/>
        </authorList>
    </citation>
    <scope>NUCLEOTIDE SEQUENCE [LARGE SCALE GENOMIC DNA]</scope>
    <source>
        <strain>cv. Columbia</strain>
    </source>
</reference>
<reference key="3">
    <citation type="journal article" date="2017" name="Plant J.">
        <title>Araport11: a complete reannotation of the Arabidopsis thaliana reference genome.</title>
        <authorList>
            <person name="Cheng C.Y."/>
            <person name="Krishnakumar V."/>
            <person name="Chan A.P."/>
            <person name="Thibaud-Nissen F."/>
            <person name="Schobel S."/>
            <person name="Town C.D."/>
        </authorList>
    </citation>
    <scope>GENOME REANNOTATION</scope>
    <source>
        <strain>cv. Columbia</strain>
    </source>
</reference>
<reference key="4">
    <citation type="journal article" date="2003" name="Science">
        <title>Empirical analysis of transcriptional activity in the Arabidopsis genome.</title>
        <authorList>
            <person name="Yamada K."/>
            <person name="Lim J."/>
            <person name="Dale J.M."/>
            <person name="Chen H."/>
            <person name="Shinn P."/>
            <person name="Palm C.J."/>
            <person name="Southwick A.M."/>
            <person name="Wu H.C."/>
            <person name="Kim C.J."/>
            <person name="Nguyen M."/>
            <person name="Pham P.K."/>
            <person name="Cheuk R.F."/>
            <person name="Karlin-Newmann G."/>
            <person name="Liu S.X."/>
            <person name="Lam B."/>
            <person name="Sakano H."/>
            <person name="Wu T."/>
            <person name="Yu G."/>
            <person name="Miranda M."/>
            <person name="Quach H.L."/>
            <person name="Tripp M."/>
            <person name="Chang C.H."/>
            <person name="Lee J.M."/>
            <person name="Toriumi M.J."/>
            <person name="Chan M.M."/>
            <person name="Tang C.C."/>
            <person name="Onodera C.S."/>
            <person name="Deng J.M."/>
            <person name="Akiyama K."/>
            <person name="Ansari Y."/>
            <person name="Arakawa T."/>
            <person name="Banh J."/>
            <person name="Banno F."/>
            <person name="Bowser L."/>
            <person name="Brooks S.Y."/>
            <person name="Carninci P."/>
            <person name="Chao Q."/>
            <person name="Choy N."/>
            <person name="Enju A."/>
            <person name="Goldsmith A.D."/>
            <person name="Gurjal M."/>
            <person name="Hansen N.F."/>
            <person name="Hayashizaki Y."/>
            <person name="Johnson-Hopson C."/>
            <person name="Hsuan V.W."/>
            <person name="Iida K."/>
            <person name="Karnes M."/>
            <person name="Khan S."/>
            <person name="Koesema E."/>
            <person name="Ishida J."/>
            <person name="Jiang P.X."/>
            <person name="Jones T."/>
            <person name="Kawai J."/>
            <person name="Kamiya A."/>
            <person name="Meyers C."/>
            <person name="Nakajima M."/>
            <person name="Narusaka M."/>
            <person name="Seki M."/>
            <person name="Sakurai T."/>
            <person name="Satou M."/>
            <person name="Tamse R."/>
            <person name="Vaysberg M."/>
            <person name="Wallender E.K."/>
            <person name="Wong C."/>
            <person name="Yamamura Y."/>
            <person name="Yuan S."/>
            <person name="Shinozaki K."/>
            <person name="Davis R.W."/>
            <person name="Theologis A."/>
            <person name="Ecker J.R."/>
        </authorList>
    </citation>
    <scope>NUCLEOTIDE SEQUENCE [LARGE SCALE MRNA] (ISOFORM 1)</scope>
    <source>
        <strain>cv. Columbia</strain>
    </source>
</reference>
<reference key="5">
    <citation type="journal article" date="2007" name="Plant J.">
        <title>Arabidopsis ESK1 encodes a novel regulator of freezing tolerance.</title>
        <authorList>
            <person name="Xin Z."/>
            <person name="Mandaokar A."/>
            <person name="Chen J."/>
            <person name="Last R.L."/>
            <person name="Browse J."/>
        </authorList>
    </citation>
    <scope>GENE FAMILY</scope>
    <source>
        <strain>cv. Columbia</strain>
    </source>
</reference>
<reference key="6">
    <citation type="journal article" date="2010" name="Plant Physiol.">
        <title>TRICHOME BIREFRINGENCE and its homolog AT5G01360 encode plant-specific DUF231 proteins required for cellulose biosynthesis in Arabidopsis.</title>
        <authorList>
            <person name="Bischoff V."/>
            <person name="Nita S."/>
            <person name="Neumetzler L."/>
            <person name="Schindelasch D."/>
            <person name="Urbain A."/>
            <person name="Eshed R."/>
            <person name="Persson S."/>
            <person name="Delmer D."/>
            <person name="Scheible W.R."/>
        </authorList>
    </citation>
    <scope>GENE FAMILY</scope>
    <scope>NOMENCLATURE</scope>
</reference>
<reference key="7">
    <citation type="journal article" date="2010" name="Plant Signal. Behav.">
        <title>Involvement of TBL/DUF231 proteins into cell wall biology.</title>
        <authorList>
            <person name="Bischoff V."/>
            <person name="Selbig J."/>
            <person name="Scheible W.R."/>
        </authorList>
    </citation>
    <scope>3D-STRUCTURE MODELING</scope>
</reference>
<protein>
    <recommendedName>
        <fullName>Protein trichome birefringence-like 30</fullName>
    </recommendedName>
</protein>
<evidence type="ECO:0000250" key="1">
    <source>
        <dbReference type="UniProtKB" id="Q9FG35"/>
    </source>
</evidence>
<evidence type="ECO:0000250" key="2">
    <source>
        <dbReference type="UniProtKB" id="Q9LY46"/>
    </source>
</evidence>
<evidence type="ECO:0000255" key="3"/>
<evidence type="ECO:0000305" key="4"/>
<evidence type="ECO:0000305" key="5">
    <source>
    </source>
</evidence>